<accession>Q44473</accession>
<comment type="catalytic activity">
    <reaction>
        <text>pyruvate + ATP = phosphoenolpyruvate + ADP + H(+)</text>
        <dbReference type="Rhea" id="RHEA:18157"/>
        <dbReference type="ChEBI" id="CHEBI:15361"/>
        <dbReference type="ChEBI" id="CHEBI:15378"/>
        <dbReference type="ChEBI" id="CHEBI:30616"/>
        <dbReference type="ChEBI" id="CHEBI:58702"/>
        <dbReference type="ChEBI" id="CHEBI:456216"/>
        <dbReference type="EC" id="2.7.1.40"/>
    </reaction>
</comment>
<comment type="cofactor">
    <cofactor>
        <name>Mg(2+)</name>
        <dbReference type="ChEBI" id="CHEBI:18420"/>
    </cofactor>
</comment>
<comment type="cofactor">
    <cofactor>
        <name>K(+)</name>
        <dbReference type="ChEBI" id="CHEBI:29103"/>
    </cofactor>
</comment>
<comment type="pathway">
    <text>Carbohydrate degradation; glycolysis; pyruvate from D-glyceraldehyde 3-phosphate: step 5/5.</text>
</comment>
<comment type="subunit">
    <text evidence="1">Homotetramer.</text>
</comment>
<comment type="induction">
    <text>By tartrate.</text>
</comment>
<comment type="similarity">
    <text evidence="3">Belongs to the pyruvate kinase family.</text>
</comment>
<proteinExistence type="evidence at transcript level"/>
<gene>
    <name type="primary">ttuE</name>
</gene>
<protein>
    <recommendedName>
        <fullName>Pyruvate kinase</fullName>
        <shortName>PK</shortName>
        <ecNumber>2.7.1.40</ecNumber>
    </recommendedName>
</protein>
<sequence>MFIRNNRRSKIVATVGPASSSPDMLRSLFLAGVDTFRLNFSHGARADHAEVYRNIRALEQEHDAAIAVLQDLQGPKIRIGVLAHGRLDLARGSTIGFILGREGGEGMNDIPLPHREIFEVAVPGMDLLIDDGRIKVRIMEVMDGRLVCEVLNGGALSNRKGVNVPGAVLDISPLTAKDREDLEFGLELGVDWVALSFVQRARDMIEARSLVGDRAGLIAKIEKPSALDDIEDIVRLSDSVMVARGDLGVEIPPEDVPGKQKEIIRACRLAAKPVIVATQMLDSMVSSPTPTRAEASDVAGAIYDGADAVMLSAETATGAYPVEAVEIMNRIIEKTEKHKHYRPILEATEPDVAQSPPHAVATAAANVAVALGSPVVVAYTSSGTTAARISRARPALPILALTPSEQVARRLNMFWGVVGVRSQDVHTYEASLIHAQQAVQEAKLASPSDHIVIVAGFPFAQQGSTNNLRVVQIAATDNLEIA</sequence>
<dbReference type="EC" id="2.7.1.40"/>
<dbReference type="EMBL" id="U25634">
    <property type="protein sequence ID" value="AAA68700.1"/>
    <property type="molecule type" value="Genomic_DNA"/>
</dbReference>
<dbReference type="RefSeq" id="WP_071207358.1">
    <property type="nucleotide sequence ID" value="NZ_AP023271.1"/>
</dbReference>
<dbReference type="SMR" id="Q44473"/>
<dbReference type="UniPathway" id="UPA00109">
    <property type="reaction ID" value="UER00188"/>
</dbReference>
<dbReference type="GO" id="GO:0005524">
    <property type="term" value="F:ATP binding"/>
    <property type="evidence" value="ECO:0007669"/>
    <property type="project" value="UniProtKB-KW"/>
</dbReference>
<dbReference type="GO" id="GO:0016301">
    <property type="term" value="F:kinase activity"/>
    <property type="evidence" value="ECO:0007669"/>
    <property type="project" value="UniProtKB-KW"/>
</dbReference>
<dbReference type="GO" id="GO:0000287">
    <property type="term" value="F:magnesium ion binding"/>
    <property type="evidence" value="ECO:0007669"/>
    <property type="project" value="InterPro"/>
</dbReference>
<dbReference type="GO" id="GO:0030955">
    <property type="term" value="F:potassium ion binding"/>
    <property type="evidence" value="ECO:0007669"/>
    <property type="project" value="InterPro"/>
</dbReference>
<dbReference type="GO" id="GO:0004743">
    <property type="term" value="F:pyruvate kinase activity"/>
    <property type="evidence" value="ECO:0007669"/>
    <property type="project" value="UniProtKB-EC"/>
</dbReference>
<dbReference type="FunFam" id="2.40.33.10:FF:000001">
    <property type="entry name" value="Pyruvate kinase"/>
    <property type="match status" value="1"/>
</dbReference>
<dbReference type="Gene3D" id="3.20.20.60">
    <property type="entry name" value="Phosphoenolpyruvate-binding domains"/>
    <property type="match status" value="1"/>
</dbReference>
<dbReference type="Gene3D" id="2.40.33.10">
    <property type="entry name" value="PK beta-barrel domain-like"/>
    <property type="match status" value="1"/>
</dbReference>
<dbReference type="Gene3D" id="3.40.1380.20">
    <property type="entry name" value="Pyruvate kinase, C-terminal domain"/>
    <property type="match status" value="1"/>
</dbReference>
<dbReference type="InterPro" id="IPR001697">
    <property type="entry name" value="Pyr_Knase"/>
</dbReference>
<dbReference type="InterPro" id="IPR015813">
    <property type="entry name" value="Pyrv/PenolPyrv_kinase-like_dom"/>
</dbReference>
<dbReference type="InterPro" id="IPR040442">
    <property type="entry name" value="Pyrv_kinase-like_dom_sf"/>
</dbReference>
<dbReference type="InterPro" id="IPR011037">
    <property type="entry name" value="Pyrv_Knase-like_insert_dom_sf"/>
</dbReference>
<dbReference type="InterPro" id="IPR018209">
    <property type="entry name" value="Pyrv_Knase_AS"/>
</dbReference>
<dbReference type="InterPro" id="IPR015793">
    <property type="entry name" value="Pyrv_Knase_brl"/>
</dbReference>
<dbReference type="InterPro" id="IPR015795">
    <property type="entry name" value="Pyrv_Knase_C"/>
</dbReference>
<dbReference type="InterPro" id="IPR036918">
    <property type="entry name" value="Pyrv_Knase_C_sf"/>
</dbReference>
<dbReference type="InterPro" id="IPR015806">
    <property type="entry name" value="Pyrv_Knase_insert_dom_sf"/>
</dbReference>
<dbReference type="NCBIfam" id="NF004491">
    <property type="entry name" value="PRK05826.1"/>
    <property type="match status" value="1"/>
</dbReference>
<dbReference type="NCBIfam" id="NF004978">
    <property type="entry name" value="PRK06354.1"/>
    <property type="match status" value="1"/>
</dbReference>
<dbReference type="NCBIfam" id="TIGR01064">
    <property type="entry name" value="pyruv_kin"/>
    <property type="match status" value="1"/>
</dbReference>
<dbReference type="PANTHER" id="PTHR11817">
    <property type="entry name" value="PYRUVATE KINASE"/>
    <property type="match status" value="1"/>
</dbReference>
<dbReference type="Pfam" id="PF00224">
    <property type="entry name" value="PK"/>
    <property type="match status" value="1"/>
</dbReference>
<dbReference type="Pfam" id="PF02887">
    <property type="entry name" value="PK_C"/>
    <property type="match status" value="1"/>
</dbReference>
<dbReference type="PRINTS" id="PR01050">
    <property type="entry name" value="PYRUVTKNASE"/>
</dbReference>
<dbReference type="SUPFAM" id="SSF51621">
    <property type="entry name" value="Phosphoenolpyruvate/pyruvate domain"/>
    <property type="match status" value="1"/>
</dbReference>
<dbReference type="SUPFAM" id="SSF50800">
    <property type="entry name" value="PK beta-barrel domain-like"/>
    <property type="match status" value="1"/>
</dbReference>
<dbReference type="SUPFAM" id="SSF52935">
    <property type="entry name" value="PK C-terminal domain-like"/>
    <property type="match status" value="1"/>
</dbReference>
<dbReference type="PROSITE" id="PS00110">
    <property type="entry name" value="PYRUVATE_KINASE"/>
    <property type="match status" value="1"/>
</dbReference>
<evidence type="ECO:0000250" key="1"/>
<evidence type="ECO:0000250" key="2">
    <source>
        <dbReference type="UniProtKB" id="P14618"/>
    </source>
</evidence>
<evidence type="ECO:0000305" key="3"/>
<organism>
    <name type="scientific">Agrobacterium vitis</name>
    <name type="common">Rhizobium vitis</name>
    <dbReference type="NCBI Taxonomy" id="373"/>
    <lineage>
        <taxon>Bacteria</taxon>
        <taxon>Pseudomonadati</taxon>
        <taxon>Pseudomonadota</taxon>
        <taxon>Alphaproteobacteria</taxon>
        <taxon>Hyphomicrobiales</taxon>
        <taxon>Rhizobiaceae</taxon>
        <taxon>Rhizobium/Agrobacterium group</taxon>
        <taxon>Agrobacterium</taxon>
    </lineage>
</organism>
<reference key="1">
    <citation type="journal article" date="1995" name="J. Bacteriol.">
        <title>Sequence and mutational analysis of a tartrate utilization operon from Agrobacterium vitis.</title>
        <authorList>
            <person name="Crouzet P."/>
            <person name="Otten L."/>
        </authorList>
    </citation>
    <scope>NUCLEOTIDE SEQUENCE [GENOMIC DNA]</scope>
    <source>
        <strain>AB4</strain>
    </source>
</reference>
<feature type="chain" id="PRO_0000112052" description="Pyruvate kinase">
    <location>
        <begin position="1"/>
        <end position="482"/>
    </location>
</feature>
<feature type="binding site" evidence="1">
    <location>
        <position position="37"/>
    </location>
    <ligand>
        <name>substrate</name>
    </ligand>
</feature>
<feature type="binding site" evidence="2">
    <location>
        <begin position="39"/>
        <end position="42"/>
    </location>
    <ligand>
        <name>ATP</name>
        <dbReference type="ChEBI" id="CHEBI:30616"/>
    </ligand>
</feature>
<feature type="binding site" evidence="1">
    <location>
        <position position="39"/>
    </location>
    <ligand>
        <name>K(+)</name>
        <dbReference type="ChEBI" id="CHEBI:29103"/>
    </ligand>
</feature>
<feature type="binding site" evidence="1">
    <location>
        <position position="41"/>
    </location>
    <ligand>
        <name>K(+)</name>
        <dbReference type="ChEBI" id="CHEBI:29103"/>
    </ligand>
</feature>
<feature type="binding site" evidence="1">
    <location>
        <position position="71"/>
    </location>
    <ligand>
        <name>K(+)</name>
        <dbReference type="ChEBI" id="CHEBI:29103"/>
    </ligand>
</feature>
<feature type="binding site" evidence="2">
    <location>
        <position position="78"/>
    </location>
    <ligand>
        <name>ATP</name>
        <dbReference type="ChEBI" id="CHEBI:30616"/>
    </ligand>
</feature>
<feature type="binding site" evidence="2">
    <location>
        <position position="160"/>
    </location>
    <ligand>
        <name>ATP</name>
        <dbReference type="ChEBI" id="CHEBI:30616"/>
    </ligand>
</feature>
<feature type="binding site" evidence="1">
    <location>
        <position position="222"/>
    </location>
    <ligand>
        <name>Mg(2+)</name>
        <dbReference type="ChEBI" id="CHEBI:18420"/>
    </ligand>
</feature>
<feature type="binding site" evidence="1">
    <location>
        <position position="245"/>
    </location>
    <ligand>
        <name>substrate</name>
    </ligand>
</feature>
<feature type="binding site" evidence="1">
    <location>
        <position position="246"/>
    </location>
    <ligand>
        <name>Mg(2+)</name>
        <dbReference type="ChEBI" id="CHEBI:18420"/>
    </ligand>
</feature>
<feature type="binding site" evidence="1">
    <location>
        <position position="246"/>
    </location>
    <ligand>
        <name>substrate</name>
    </ligand>
</feature>
<feature type="binding site" evidence="1">
    <location>
        <position position="278"/>
    </location>
    <ligand>
        <name>substrate</name>
    </ligand>
</feature>
<feature type="site" description="Transition state stabilizer" evidence="1">
    <location>
        <position position="220"/>
    </location>
</feature>
<name>KPYK2_AGRVI</name>
<geneLocation type="plasmid">
    <name>pTrAB4</name>
</geneLocation>
<keyword id="KW-0067">ATP-binding</keyword>
<keyword id="KW-0324">Glycolysis</keyword>
<keyword id="KW-0418">Kinase</keyword>
<keyword id="KW-0460">Magnesium</keyword>
<keyword id="KW-0479">Metal-binding</keyword>
<keyword id="KW-0547">Nucleotide-binding</keyword>
<keyword id="KW-0614">Plasmid</keyword>
<keyword id="KW-0630">Potassium</keyword>
<keyword id="KW-0670">Pyruvate</keyword>
<keyword id="KW-0808">Transferase</keyword>